<reference key="1">
    <citation type="submission" date="2008-10" db="EMBL/GenBank/DDBJ databases">
        <title>Genome sequence of Clostridium botulinum A2 Kyoto.</title>
        <authorList>
            <person name="Shrivastava S."/>
            <person name="Brinkac L.M."/>
            <person name="Brown J.L."/>
            <person name="Bruce D."/>
            <person name="Detter C.C."/>
            <person name="Johnson E.A."/>
            <person name="Munk C.A."/>
            <person name="Smith L.A."/>
            <person name="Smith T.J."/>
            <person name="Sutton G."/>
            <person name="Brettin T.S."/>
        </authorList>
    </citation>
    <scope>NUCLEOTIDE SEQUENCE [LARGE SCALE GENOMIC DNA]</scope>
    <source>
        <strain>Kyoto / Type A2</strain>
    </source>
</reference>
<protein>
    <recommendedName>
        <fullName evidence="1">Transcriptional repressor NrdR</fullName>
    </recommendedName>
</protein>
<feature type="chain" id="PRO_1000191787" description="Transcriptional repressor NrdR">
    <location>
        <begin position="1"/>
        <end position="151"/>
    </location>
</feature>
<feature type="domain" description="ATP-cone" evidence="1">
    <location>
        <begin position="49"/>
        <end position="139"/>
    </location>
</feature>
<feature type="zinc finger region" evidence="1">
    <location>
        <begin position="3"/>
        <end position="34"/>
    </location>
</feature>
<organism>
    <name type="scientific">Clostridium botulinum (strain Kyoto / Type A2)</name>
    <dbReference type="NCBI Taxonomy" id="536232"/>
    <lineage>
        <taxon>Bacteria</taxon>
        <taxon>Bacillati</taxon>
        <taxon>Bacillota</taxon>
        <taxon>Clostridia</taxon>
        <taxon>Eubacteriales</taxon>
        <taxon>Clostridiaceae</taxon>
        <taxon>Clostridium</taxon>
    </lineage>
</organism>
<keyword id="KW-0067">ATP-binding</keyword>
<keyword id="KW-0238">DNA-binding</keyword>
<keyword id="KW-0479">Metal-binding</keyword>
<keyword id="KW-0547">Nucleotide-binding</keyword>
<keyword id="KW-0678">Repressor</keyword>
<keyword id="KW-0804">Transcription</keyword>
<keyword id="KW-0805">Transcription regulation</keyword>
<keyword id="KW-0862">Zinc</keyword>
<keyword id="KW-0863">Zinc-finger</keyword>
<proteinExistence type="inferred from homology"/>
<gene>
    <name evidence="1" type="primary">nrdR</name>
    <name type="ordered locus">CLM_2834</name>
</gene>
<evidence type="ECO:0000255" key="1">
    <source>
        <dbReference type="HAMAP-Rule" id="MF_00440"/>
    </source>
</evidence>
<dbReference type="EMBL" id="CP001581">
    <property type="protein sequence ID" value="ACO85081.1"/>
    <property type="molecule type" value="Genomic_DNA"/>
</dbReference>
<dbReference type="RefSeq" id="WP_003399430.1">
    <property type="nucleotide sequence ID" value="NC_012563.1"/>
</dbReference>
<dbReference type="SMR" id="C1FSV2"/>
<dbReference type="GeneID" id="5186785"/>
<dbReference type="KEGG" id="cby:CLM_2834"/>
<dbReference type="eggNOG" id="COG1327">
    <property type="taxonomic scope" value="Bacteria"/>
</dbReference>
<dbReference type="HOGENOM" id="CLU_108412_0_0_9"/>
<dbReference type="Proteomes" id="UP000001374">
    <property type="component" value="Chromosome"/>
</dbReference>
<dbReference type="GO" id="GO:0005524">
    <property type="term" value="F:ATP binding"/>
    <property type="evidence" value="ECO:0007669"/>
    <property type="project" value="UniProtKB-KW"/>
</dbReference>
<dbReference type="GO" id="GO:0003677">
    <property type="term" value="F:DNA binding"/>
    <property type="evidence" value="ECO:0007669"/>
    <property type="project" value="UniProtKB-KW"/>
</dbReference>
<dbReference type="GO" id="GO:0008270">
    <property type="term" value="F:zinc ion binding"/>
    <property type="evidence" value="ECO:0007669"/>
    <property type="project" value="UniProtKB-UniRule"/>
</dbReference>
<dbReference type="GO" id="GO:0045892">
    <property type="term" value="P:negative regulation of DNA-templated transcription"/>
    <property type="evidence" value="ECO:0007669"/>
    <property type="project" value="UniProtKB-UniRule"/>
</dbReference>
<dbReference type="HAMAP" id="MF_00440">
    <property type="entry name" value="NrdR"/>
    <property type="match status" value="1"/>
</dbReference>
<dbReference type="InterPro" id="IPR005144">
    <property type="entry name" value="ATP-cone_dom"/>
</dbReference>
<dbReference type="InterPro" id="IPR055173">
    <property type="entry name" value="NrdR-like_N"/>
</dbReference>
<dbReference type="InterPro" id="IPR003796">
    <property type="entry name" value="RNR_NrdR-like"/>
</dbReference>
<dbReference type="NCBIfam" id="TIGR00244">
    <property type="entry name" value="transcriptional regulator NrdR"/>
    <property type="match status" value="1"/>
</dbReference>
<dbReference type="PANTHER" id="PTHR30455">
    <property type="entry name" value="TRANSCRIPTIONAL REPRESSOR NRDR"/>
    <property type="match status" value="1"/>
</dbReference>
<dbReference type="PANTHER" id="PTHR30455:SF2">
    <property type="entry name" value="TRANSCRIPTIONAL REPRESSOR NRDR"/>
    <property type="match status" value="1"/>
</dbReference>
<dbReference type="Pfam" id="PF03477">
    <property type="entry name" value="ATP-cone"/>
    <property type="match status" value="1"/>
</dbReference>
<dbReference type="Pfam" id="PF22811">
    <property type="entry name" value="Zn_ribbon_NrdR"/>
    <property type="match status" value="1"/>
</dbReference>
<dbReference type="PROSITE" id="PS51161">
    <property type="entry name" value="ATP_CONE"/>
    <property type="match status" value="1"/>
</dbReference>
<name>NRDR_CLOBJ</name>
<sequence length="151" mass="17933">MKCPYCAYGESKVVDSRSTEDGSSIRRRRECLKCNRRYTTYEKIETTPILVIKKNMSREYFDRNKIVNGLMKACQKRPVSRKQIEQIANEVERHISNEMLTEVNTDKIGQIIMKNLKKIDEVSYVRFASVYRQFKDINTFMEEIKNLMDKN</sequence>
<accession>C1FSV2</accession>
<comment type="function">
    <text evidence="1">Negatively regulates transcription of bacterial ribonucleotide reductase nrd genes and operons by binding to NrdR-boxes.</text>
</comment>
<comment type="cofactor">
    <cofactor evidence="1">
        <name>Zn(2+)</name>
        <dbReference type="ChEBI" id="CHEBI:29105"/>
    </cofactor>
    <text evidence="1">Binds 1 zinc ion.</text>
</comment>
<comment type="similarity">
    <text evidence="1">Belongs to the NrdR family.</text>
</comment>